<organismHost>
    <name type="scientific">Homo sapiens</name>
    <name type="common">Human</name>
    <dbReference type="NCBI Taxonomy" id="9606"/>
</organismHost>
<organism>
    <name type="scientific">Human adenovirus B serotype 35</name>
    <name type="common">HAdV-35</name>
    <name type="synonym">Human adenovirus 35</name>
    <dbReference type="NCBI Taxonomy" id="10522"/>
    <lineage>
        <taxon>Viruses</taxon>
        <taxon>Varidnaviria</taxon>
        <taxon>Bamfordvirae</taxon>
        <taxon>Preplasmiviricota</taxon>
        <taxon>Tectiliviricetes</taxon>
        <taxon>Rowavirales</taxon>
        <taxon>Adenoviridae</taxon>
        <taxon>Mastadenovirus</taxon>
        <taxon>Human mastadenovirus B</taxon>
    </lineage>
</organism>
<feature type="signal peptide" evidence="2">
    <location>
        <begin position="1"/>
        <end position="19"/>
    </location>
</feature>
<feature type="chain" id="PRO_0000036488" description="Early E3 18.5 kDa glycoprotein">
    <location>
        <begin position="20"/>
        <end position="166"/>
    </location>
</feature>
<feature type="topological domain" description="Lumenal" evidence="2">
    <location>
        <begin position="20"/>
        <end position="131"/>
    </location>
</feature>
<feature type="transmembrane region" description="Helical" evidence="2">
    <location>
        <begin position="132"/>
        <end position="152"/>
    </location>
</feature>
<feature type="topological domain" description="Cytoplasmic" evidence="2">
    <location>
        <begin position="153"/>
        <end position="166"/>
    </location>
</feature>
<feature type="short sequence motif" description="Di-lysine motif" evidence="1">
    <location>
        <begin position="162"/>
        <end position="166"/>
    </location>
</feature>
<feature type="glycosylation site" description="N-linked (GlcNAc...) asparagine; by host" evidence="2">
    <location>
        <position position="31"/>
    </location>
</feature>
<feature type="glycosylation site" description="N-linked (GlcNAc...) asparagine; by host" evidence="2">
    <location>
        <position position="63"/>
    </location>
</feature>
<feature type="glycosylation site" description="N-linked (GlcNAc...) asparagine; by host" evidence="2">
    <location>
        <position position="67"/>
    </location>
</feature>
<feature type="glycosylation site" description="N-linked (GlcNAc...) asparagine; by host" evidence="2">
    <location>
        <position position="97"/>
    </location>
</feature>
<feature type="disulfide bond" evidence="1">
    <location>
        <begin position="32"/>
        <end position="50"/>
    </location>
</feature>
<feature type="disulfide bond" evidence="1">
    <location>
        <begin position="44"/>
        <end position="106"/>
    </location>
</feature>
<feature type="sequence conflict" description="In Ref. 1; AAA42435." evidence="3" ref="1">
    <original>VLIKCGWE</original>
    <variation>FLLSADGK</variation>
    <location>
        <begin position="46"/>
        <end position="53"/>
    </location>
</feature>
<dbReference type="EMBL" id="M23195">
    <property type="protein sequence ID" value="AAA42435.1"/>
    <property type="molecule type" value="Genomic_DNA"/>
</dbReference>
<dbReference type="EMBL" id="U32664">
    <property type="protein sequence ID" value="AAA75325.1"/>
    <property type="molecule type" value="Genomic_DNA"/>
</dbReference>
<dbReference type="PIR" id="JC4768">
    <property type="entry name" value="ERAD85"/>
</dbReference>
<dbReference type="RefSeq" id="AP_000594.1">
    <property type="nucleotide sequence ID" value="AC_000019.1"/>
</dbReference>
<dbReference type="SMR" id="P68981"/>
<dbReference type="GO" id="GO:0044167">
    <property type="term" value="C:host cell endoplasmic reticulum membrane"/>
    <property type="evidence" value="ECO:0007669"/>
    <property type="project" value="UniProtKB-SubCell"/>
</dbReference>
<dbReference type="GO" id="GO:0016020">
    <property type="term" value="C:membrane"/>
    <property type="evidence" value="ECO:0007669"/>
    <property type="project" value="UniProtKB-KW"/>
</dbReference>
<dbReference type="GO" id="GO:0005537">
    <property type="term" value="F:D-mannose binding"/>
    <property type="evidence" value="ECO:0007669"/>
    <property type="project" value="UniProtKB-KW"/>
</dbReference>
<dbReference type="GO" id="GO:0046776">
    <property type="term" value="P:symbiont-mediated suppression of host antigen processing and presentation of peptide antigen via MHC class I"/>
    <property type="evidence" value="ECO:0007669"/>
    <property type="project" value="UniProtKB-KW"/>
</dbReference>
<dbReference type="Gene3D" id="2.60.40.3530">
    <property type="match status" value="1"/>
</dbReference>
<dbReference type="InterPro" id="IPR006965">
    <property type="entry name" value="Adenovirus_Gp19K"/>
</dbReference>
<dbReference type="InterPro" id="IPR038710">
    <property type="entry name" value="Adenovirus_Gp19K_sf"/>
</dbReference>
<dbReference type="Pfam" id="PF04881">
    <property type="entry name" value="Adeno_GP19K"/>
    <property type="match status" value="1"/>
</dbReference>
<evidence type="ECO:0000250" key="1"/>
<evidence type="ECO:0000255" key="2"/>
<evidence type="ECO:0000305" key="3"/>
<sequence>MGPILVLLVLLSLLEPGSANYDPCLDFDPENCTLTFAPDTSRICGVLIKCGWECRSVEITHNNKTWNNTLSTTWEPGVPEWYTVSVRGPDGSIRISNNTFIFSEMCDLAMFMSKQYSLWPPSKDNIVTFSIAYCLCACLLTALLCVCIHLLVTTRIKNANNKEKMP</sequence>
<accession>P68981</accession>
<accession>P15140</accession>
<accession>P35772</accession>
<name>E3GL_ADE35</name>
<protein>
    <recommendedName>
        <fullName>Early E3 18.5 kDa glycoprotein</fullName>
    </recommendedName>
    <alternativeName>
        <fullName>E3-19K</fullName>
    </alternativeName>
    <alternativeName>
        <fullName>E3gp 19 kDa</fullName>
        <shortName>E19</shortName>
    </alternativeName>
    <alternativeName>
        <fullName>GP19K</fullName>
    </alternativeName>
</protein>
<reference key="1">
    <citation type="journal article" date="1988" name="J. Virol.">
        <title>Sequence and genetic organization of adenovirus type 35 early region 3.</title>
        <authorList>
            <person name="Flomenberg P.R."/>
            <person name="Chen M."/>
            <person name="Horwitz M.S."/>
        </authorList>
    </citation>
    <scope>NUCLEOTIDE SEQUENCE [GENOMIC DNA]</scope>
    <source>
        <strain>Holden</strain>
    </source>
</reference>
<reference key="2">
    <citation type="journal article" date="1996" name="Gene">
        <title>Sequence of the immunoregulatory early region 3 and flanking sequences of adenovirus type 35.</title>
        <authorList>
            <person name="Basler C.F."/>
            <person name="Droguett G."/>
            <person name="Horwitz M.S."/>
        </authorList>
    </citation>
    <scope>NUCLEOTIDE SEQUENCE [GENOMIC DNA]</scope>
    <scope>SEQUENCE REVISION TO 46-53</scope>
    <source>
        <strain>Holden</strain>
    </source>
</reference>
<keyword id="KW-1015">Disulfide bond</keyword>
<keyword id="KW-0244">Early protein</keyword>
<keyword id="KW-0325">Glycoprotein</keyword>
<keyword id="KW-1038">Host endoplasmic reticulum</keyword>
<keyword id="KW-1043">Host membrane</keyword>
<keyword id="KW-0945">Host-virus interaction</keyword>
<keyword id="KW-1080">Inhibition of host adaptive immune response by virus</keyword>
<keyword id="KW-1108">Inhibition of host tapasin by virus</keyword>
<keyword id="KW-0430">Lectin</keyword>
<keyword id="KW-0465">Mannose-binding</keyword>
<keyword id="KW-0472">Membrane</keyword>
<keyword id="KW-0732">Signal</keyword>
<keyword id="KW-0812">Transmembrane</keyword>
<keyword id="KW-1133">Transmembrane helix</keyword>
<keyword id="KW-0899">Viral immunoevasion</keyword>
<comment type="function">
    <text evidence="1">Binds and retains class I heavy chains in the endoplasmic reticulum during the early period of virus infection, thereby impairing their transport to the cell surface. Also delays the expression of class I alleles that it cannot affect by direct retention. Binds transporters associated with antigen processing (TAP) and acts as a tapasin inhibitor, preventing class I/TAP association. In consequence, infected cells are masked for immune recognition by cytotoxic T-lymphocytes (By similarity).</text>
</comment>
<comment type="subcellular location">
    <subcellularLocation>
        <location>Host endoplasmic reticulum membrane</location>
        <topology>Single-pass type I membrane protein</topology>
    </subcellularLocation>
</comment>
<comment type="developmental stage">
    <text>Expressed at early period of virus infection.</text>
</comment>
<comment type="domain">
    <text>The lumenal domain binds directly to the peptide-binding domain of class I molecules.</text>
</comment>
<comment type="domain">
    <text evidence="1">The di-lysine motif confers endoplasmic reticulum localization for type I membrane proteins.</text>
</comment>
<comment type="PTM">
    <text evidence="1">Both disulfide bonds are absolutely critical for the interaction with MHC antigens.</text>
</comment>
<comment type="PTM">
    <text evidence="1">N-glycosylated; high-mannose.</text>
</comment>
<comment type="similarity">
    <text evidence="3">Belongs to the adenoviridae E19 family.</text>
</comment>
<proteinExistence type="evidence at transcript level"/>